<evidence type="ECO:0000250" key="1">
    <source>
        <dbReference type="UniProtKB" id="P0A8P8"/>
    </source>
</evidence>
<evidence type="ECO:0000255" key="2">
    <source>
        <dbReference type="HAMAP-Rule" id="MF_01816"/>
    </source>
</evidence>
<evidence type="ECO:0000255" key="3">
    <source>
        <dbReference type="PROSITE-ProRule" id="PRU01246"/>
    </source>
</evidence>
<evidence type="ECO:0000255" key="4">
    <source>
        <dbReference type="PROSITE-ProRule" id="PRU01248"/>
    </source>
</evidence>
<evidence type="ECO:0000269" key="5">
    <source>
    </source>
</evidence>
<evidence type="ECO:0000269" key="6">
    <source>
    </source>
</evidence>
<evidence type="ECO:0000303" key="7">
    <source>
    </source>
</evidence>
<evidence type="ECO:0000305" key="8"/>
<evidence type="ECO:0000305" key="9">
    <source>
    </source>
</evidence>
<organism>
    <name type="scientific">Streptococcus pneumoniae (strain ATCC BAA-255 / R6)</name>
    <dbReference type="NCBI Taxonomy" id="171101"/>
    <lineage>
        <taxon>Bacteria</taxon>
        <taxon>Bacillati</taxon>
        <taxon>Bacillota</taxon>
        <taxon>Bacilli</taxon>
        <taxon>Lactobacillales</taxon>
        <taxon>Streptococcaceae</taxon>
        <taxon>Streptococcus</taxon>
    </lineage>
</organism>
<reference key="1">
    <citation type="journal article" date="2001" name="J. Bacteriol.">
        <title>Genome of the bacterium Streptococcus pneumoniae strain R6.</title>
        <authorList>
            <person name="Hoskins J."/>
            <person name="Alborn W.E. Jr."/>
            <person name="Arnold J."/>
            <person name="Blaszczak L.C."/>
            <person name="Burgett S."/>
            <person name="DeHoff B.S."/>
            <person name="Estrem S.T."/>
            <person name="Fritz L."/>
            <person name="Fu D.-J."/>
            <person name="Fuller W."/>
            <person name="Geringer C."/>
            <person name="Gilmour R."/>
            <person name="Glass J.S."/>
            <person name="Khoja H."/>
            <person name="Kraft A.R."/>
            <person name="Lagace R.E."/>
            <person name="LeBlanc D.J."/>
            <person name="Lee L.N."/>
            <person name="Lefkowitz E.J."/>
            <person name="Lu J."/>
            <person name="Matsushima P."/>
            <person name="McAhren S.M."/>
            <person name="McHenney M."/>
            <person name="McLeaster K."/>
            <person name="Mundy C.W."/>
            <person name="Nicas T.I."/>
            <person name="Norris F.H."/>
            <person name="O'Gara M."/>
            <person name="Peery R.B."/>
            <person name="Robertson G.T."/>
            <person name="Rockey P."/>
            <person name="Sun P.-M."/>
            <person name="Winkler M.E."/>
            <person name="Yang Y."/>
            <person name="Young-Bellido M."/>
            <person name="Zhao G."/>
            <person name="Zook C.A."/>
            <person name="Baltz R.H."/>
            <person name="Jaskunas S.R."/>
            <person name="Rosteck P.R. Jr."/>
            <person name="Skatrud P.L."/>
            <person name="Glass J.I."/>
        </authorList>
    </citation>
    <scope>NUCLEOTIDE SEQUENCE [LARGE SCALE GENOMIC DNA]</scope>
    <source>
        <strain>ATCC BAA-255 / R6</strain>
    </source>
</reference>
<reference key="2">
    <citation type="journal article" date="2007" name="PLoS Genet.">
        <title>The unconventional Xer recombination machinery of Streptococci/Lactococci.</title>
        <authorList>
            <person name="Le Bourgeois P."/>
            <person name="Bugarel M."/>
            <person name="Campo N."/>
            <person name="Daveran-Mingot M.-L."/>
            <person name="Labonte J."/>
            <person name="Lanfranchi D."/>
            <person name="Lautier T."/>
            <person name="Pages C."/>
            <person name="Ritzenthaler P."/>
        </authorList>
    </citation>
    <scope>FUNCTION AS A RECOMBINASE</scope>
    <scope>ACTIVITY REGULATION</scope>
    <source>
        <strain>ATCC BAA-255 / R6</strain>
    </source>
</reference>
<reference key="3">
    <citation type="journal article" date="2015" name="PLoS Genet.">
        <title>RecFOR is not required for pneumococcal transformation but together with XerS for resolution of chromosome dimers frequently formed in the process.</title>
        <authorList>
            <person name="Johnston C."/>
            <person name="Mortier-Barriere I."/>
            <person name="Granadel C."/>
            <person name="Polard P."/>
            <person name="Martin B."/>
            <person name="Claverys J.P."/>
        </authorList>
    </citation>
    <scope>FUNCTION</scope>
</reference>
<dbReference type="EMBL" id="AE007317">
    <property type="protein sequence ID" value="AAK99850.1"/>
    <property type="molecule type" value="Genomic_DNA"/>
</dbReference>
<dbReference type="PIR" id="F98002">
    <property type="entry name" value="F98002"/>
</dbReference>
<dbReference type="RefSeq" id="NP_358640.1">
    <property type="nucleotide sequence ID" value="NC_003098.1"/>
</dbReference>
<dbReference type="RefSeq" id="WP_000817882.1">
    <property type="nucleotide sequence ID" value="NC_003098.1"/>
</dbReference>
<dbReference type="SMR" id="Q7ZAK7"/>
<dbReference type="STRING" id="171101.spr1046"/>
<dbReference type="KEGG" id="spr:spr1046"/>
<dbReference type="PATRIC" id="fig|171101.6.peg.1137"/>
<dbReference type="eggNOG" id="COG4974">
    <property type="taxonomic scope" value="Bacteria"/>
</dbReference>
<dbReference type="HOGENOM" id="CLU_027562_9_6_9"/>
<dbReference type="Proteomes" id="UP000000586">
    <property type="component" value="Chromosome"/>
</dbReference>
<dbReference type="GO" id="GO:0005737">
    <property type="term" value="C:cytoplasm"/>
    <property type="evidence" value="ECO:0007669"/>
    <property type="project" value="UniProtKB-SubCell"/>
</dbReference>
<dbReference type="GO" id="GO:0003677">
    <property type="term" value="F:DNA binding"/>
    <property type="evidence" value="ECO:0007669"/>
    <property type="project" value="UniProtKB-KW"/>
</dbReference>
<dbReference type="GO" id="GO:0009009">
    <property type="term" value="F:site-specific recombinase activity"/>
    <property type="evidence" value="ECO:0000318"/>
    <property type="project" value="GO_Central"/>
</dbReference>
<dbReference type="GO" id="GO:0009037">
    <property type="term" value="F:tyrosine-based site-specific recombinase activity"/>
    <property type="evidence" value="ECO:0007669"/>
    <property type="project" value="UniProtKB-UniRule"/>
</dbReference>
<dbReference type="GO" id="GO:0051301">
    <property type="term" value="P:cell division"/>
    <property type="evidence" value="ECO:0007669"/>
    <property type="project" value="UniProtKB-KW"/>
</dbReference>
<dbReference type="GO" id="GO:0007059">
    <property type="term" value="P:chromosome segregation"/>
    <property type="evidence" value="ECO:0000318"/>
    <property type="project" value="GO_Central"/>
</dbReference>
<dbReference type="GO" id="GO:0006310">
    <property type="term" value="P:DNA recombination"/>
    <property type="evidence" value="ECO:0000318"/>
    <property type="project" value="GO_Central"/>
</dbReference>
<dbReference type="Gene3D" id="1.10.150.130">
    <property type="match status" value="1"/>
</dbReference>
<dbReference type="Gene3D" id="1.10.443.10">
    <property type="entry name" value="Intergrase catalytic core"/>
    <property type="match status" value="1"/>
</dbReference>
<dbReference type="HAMAP" id="MF_01816">
    <property type="entry name" value="Recomb_XerS"/>
    <property type="match status" value="1"/>
</dbReference>
<dbReference type="InterPro" id="IPR044068">
    <property type="entry name" value="CB"/>
</dbReference>
<dbReference type="InterPro" id="IPR011010">
    <property type="entry name" value="DNA_brk_join_enz"/>
</dbReference>
<dbReference type="InterPro" id="IPR013762">
    <property type="entry name" value="Integrase-like_cat_sf"/>
</dbReference>
<dbReference type="InterPro" id="IPR002104">
    <property type="entry name" value="Integrase_catalytic"/>
</dbReference>
<dbReference type="InterPro" id="IPR010998">
    <property type="entry name" value="Integrase_recombinase_N"/>
</dbReference>
<dbReference type="InterPro" id="IPR004107">
    <property type="entry name" value="Integrase_SAM-like_N"/>
</dbReference>
<dbReference type="InterPro" id="IPR023670">
    <property type="entry name" value="Recomb_XerS"/>
</dbReference>
<dbReference type="InterPro" id="IPR050090">
    <property type="entry name" value="Tyrosine_recombinase_XerCD"/>
</dbReference>
<dbReference type="NCBIfam" id="NF003462">
    <property type="entry name" value="PRK05084.1"/>
    <property type="match status" value="1"/>
</dbReference>
<dbReference type="PANTHER" id="PTHR30349">
    <property type="entry name" value="PHAGE INTEGRASE-RELATED"/>
    <property type="match status" value="1"/>
</dbReference>
<dbReference type="PANTHER" id="PTHR30349:SF77">
    <property type="entry name" value="TYROSINE RECOMBINASE XERC"/>
    <property type="match status" value="1"/>
</dbReference>
<dbReference type="Pfam" id="PF02899">
    <property type="entry name" value="Phage_int_SAM_1"/>
    <property type="match status" value="1"/>
</dbReference>
<dbReference type="Pfam" id="PF00589">
    <property type="entry name" value="Phage_integrase"/>
    <property type="match status" value="1"/>
</dbReference>
<dbReference type="SUPFAM" id="SSF56349">
    <property type="entry name" value="DNA breaking-rejoining enzymes"/>
    <property type="match status" value="1"/>
</dbReference>
<dbReference type="PROSITE" id="PS51900">
    <property type="entry name" value="CB"/>
    <property type="match status" value="1"/>
</dbReference>
<dbReference type="PROSITE" id="PS51898">
    <property type="entry name" value="TYR_RECOMBINASE"/>
    <property type="match status" value="1"/>
</dbReference>
<sequence length="356" mass="41171">MKREILLERIDKLKQLMPWYVLEYYQSKLAVPYSFTTLYEYLKEYDRFFSWVLESGISNADKISDIPLSVLENMSKKDMESFILYLRERPLLNANTTKQGVSQTTINRTLSALSSLYKYLTEEVENDQGEPYFYRNVMKKVSTKKKKETLAARAENIKQKLFLGDETEGFLTYIDQEHPQQLSNRALSSFNKNKERDLAIIALLLASGVRLSEAVNLDLRDLNLKMMVIDVTRKGGKRDSVNVAAFAKPYLENYLAIRNQRYKTEKTDTALFLTLYRGVPNRIDASSVEKMVAKYSEDFKVRVTPHKLRHTLATRLYDATKSQVLVSHQLGHASTQVTDLYTHIVNDEQKNALDSL</sequence>
<comment type="function">
    <text evidence="5 6">Site-specific tyrosine recombinase, which acts by catalyzing the cutting and rejoining of the recombining DNA molecules. Essential to convert dimers of the bacterial chromosome into monomers to permit their segregation at cell division (PubMed:17630835). Required for resolution of chromosome dimers frequently formed by transformation (PubMed:25569614).</text>
</comment>
<comment type="activity regulation">
    <text evidence="2 5">FtsK is required for recombination.</text>
</comment>
<comment type="subcellular location">
    <subcellularLocation>
        <location evidence="2 8">Cytoplasm</location>
    </subcellularLocation>
</comment>
<comment type="miscellaneous">
    <text evidence="9">In contrast to the XerC-XerD complex present in non-streptococcaceae bacteria, XerS acts as a single recombinase required to recombine difSL recombination site.</text>
</comment>
<comment type="similarity">
    <text evidence="2 8">Belongs to the 'phage' integrase family. XerS subfamily.</text>
</comment>
<keyword id="KW-0131">Cell cycle</keyword>
<keyword id="KW-0132">Cell division</keyword>
<keyword id="KW-0159">Chromosome partition</keyword>
<keyword id="KW-0963">Cytoplasm</keyword>
<keyword id="KW-0229">DNA integration</keyword>
<keyword id="KW-0233">DNA recombination</keyword>
<keyword id="KW-0238">DNA-binding</keyword>
<keyword id="KW-1185">Reference proteome</keyword>
<proteinExistence type="evidence at protein level"/>
<accession>Q7ZAK7</accession>
<name>XERS_STRR6</name>
<gene>
    <name evidence="2 7" type="primary">xerS</name>
    <name type="ordered locus">spr1046</name>
</gene>
<feature type="chain" id="PRO_0000095364" description="Tyrosine recombinase XerS">
    <location>
        <begin position="1"/>
        <end position="356"/>
    </location>
</feature>
<feature type="domain" description="Core-binding (CB)" evidence="4">
    <location>
        <begin position="16"/>
        <end position="121"/>
    </location>
</feature>
<feature type="domain" description="Tyr recombinase" evidence="3">
    <location>
        <begin position="169"/>
        <end position="354"/>
    </location>
</feature>
<feature type="active site" evidence="1 2">
    <location>
        <position position="210"/>
    </location>
</feature>
<feature type="active site" evidence="1 2">
    <location>
        <position position="234"/>
    </location>
</feature>
<feature type="active site" evidence="1 2">
    <location>
        <position position="306"/>
    </location>
</feature>
<feature type="active site" evidence="1 2">
    <location>
        <position position="309"/>
    </location>
</feature>
<feature type="active site" evidence="1 2">
    <location>
        <position position="332"/>
    </location>
</feature>
<feature type="active site" description="O-(3'-phospho-DNA)-tyrosine intermediate" evidence="1 2">
    <location>
        <position position="341"/>
    </location>
</feature>
<protein>
    <recommendedName>
        <fullName evidence="2 8">Tyrosine recombinase XerS</fullName>
    </recommendedName>
</protein>